<accession>Q9TJR1</accession>
<dbReference type="EMBL" id="AJ245645">
    <property type="protein sequence ID" value="CAB53110.1"/>
    <property type="molecule type" value="Genomic_DNA"/>
</dbReference>
<dbReference type="SMR" id="Q9TJR1"/>
<dbReference type="GO" id="GO:0009536">
    <property type="term" value="C:plastid"/>
    <property type="evidence" value="ECO:0007669"/>
    <property type="project" value="UniProtKB-SubCell"/>
</dbReference>
<dbReference type="GO" id="GO:1990904">
    <property type="term" value="C:ribonucleoprotein complex"/>
    <property type="evidence" value="ECO:0007669"/>
    <property type="project" value="UniProtKB-KW"/>
</dbReference>
<dbReference type="GO" id="GO:0005840">
    <property type="term" value="C:ribosome"/>
    <property type="evidence" value="ECO:0007669"/>
    <property type="project" value="UniProtKB-KW"/>
</dbReference>
<dbReference type="GO" id="GO:0019843">
    <property type="term" value="F:rRNA binding"/>
    <property type="evidence" value="ECO:0007669"/>
    <property type="project" value="UniProtKB-KW"/>
</dbReference>
<dbReference type="GO" id="GO:0003735">
    <property type="term" value="F:structural constituent of ribosome"/>
    <property type="evidence" value="ECO:0007669"/>
    <property type="project" value="InterPro"/>
</dbReference>
<dbReference type="GO" id="GO:0006412">
    <property type="term" value="P:translation"/>
    <property type="evidence" value="ECO:0007669"/>
    <property type="project" value="InterPro"/>
</dbReference>
<dbReference type="CDD" id="cd07026">
    <property type="entry name" value="Ribosomal_L20"/>
    <property type="match status" value="1"/>
</dbReference>
<dbReference type="FunFam" id="1.10.1900.20:FF:000001">
    <property type="entry name" value="50S ribosomal protein L20"/>
    <property type="match status" value="1"/>
</dbReference>
<dbReference type="Gene3D" id="6.10.160.10">
    <property type="match status" value="1"/>
</dbReference>
<dbReference type="Gene3D" id="1.10.1900.20">
    <property type="entry name" value="Ribosomal protein L20"/>
    <property type="match status" value="1"/>
</dbReference>
<dbReference type="HAMAP" id="MF_00382">
    <property type="entry name" value="Ribosomal_bL20"/>
    <property type="match status" value="1"/>
</dbReference>
<dbReference type="InterPro" id="IPR005813">
    <property type="entry name" value="Ribosomal_bL20"/>
</dbReference>
<dbReference type="InterPro" id="IPR049946">
    <property type="entry name" value="RIBOSOMAL_L20_CS"/>
</dbReference>
<dbReference type="InterPro" id="IPR035566">
    <property type="entry name" value="Ribosomal_protein_bL20_C"/>
</dbReference>
<dbReference type="NCBIfam" id="TIGR01032">
    <property type="entry name" value="rplT_bact"/>
    <property type="match status" value="1"/>
</dbReference>
<dbReference type="PANTHER" id="PTHR10986">
    <property type="entry name" value="39S RIBOSOMAL PROTEIN L20"/>
    <property type="match status" value="1"/>
</dbReference>
<dbReference type="Pfam" id="PF00453">
    <property type="entry name" value="Ribosomal_L20"/>
    <property type="match status" value="1"/>
</dbReference>
<dbReference type="PRINTS" id="PR00062">
    <property type="entry name" value="RIBOSOMALL20"/>
</dbReference>
<dbReference type="SUPFAM" id="SSF74731">
    <property type="entry name" value="Ribosomal protein L20"/>
    <property type="match status" value="1"/>
</dbReference>
<dbReference type="PROSITE" id="PS00937">
    <property type="entry name" value="RIBOSOMAL_L20"/>
    <property type="match status" value="1"/>
</dbReference>
<reference key="1">
    <citation type="journal article" date="2002" name="Mol. Genet. Genomics">
        <title>The genes encoding subunits of ATP synthase are conserved in the reduced plastid genome of the heterotrophic alga Prototheca wickerhamii.</title>
        <authorList>
            <person name="Knauf U."/>
            <person name="Hachtel W."/>
        </authorList>
    </citation>
    <scope>NUCLEOTIDE SEQUENCE [GENOMIC DNA]</scope>
    <source>
        <strain>263-11</strain>
    </source>
</reference>
<gene>
    <name evidence="1" type="primary">rpl20</name>
</gene>
<sequence>MTRVKRGNIARNRRNEILDLAKGFRGSSSKLYRTAQQRTIKALTNSYKDRKNKKREFVKIWVSRINAAVRLSGLNYSSFQNQLKFHKIRLNRKICSQIALQDQESFTKLLDLII</sequence>
<name>RK20_PROWI</name>
<comment type="function">
    <text evidence="1">Binds directly to 23S ribosomal RNA and is necessary for the in vitro assembly process of the 50S ribosomal subunit. It is not involved in the protein synthesizing functions of that subunit.</text>
</comment>
<comment type="subcellular location">
    <subcellularLocation>
        <location>Plastid</location>
    </subcellularLocation>
</comment>
<comment type="similarity">
    <text evidence="1">Belongs to the bacterial ribosomal protein bL20 family.</text>
</comment>
<organism>
    <name type="scientific">Prototheca wickerhamii</name>
    <dbReference type="NCBI Taxonomy" id="3111"/>
    <lineage>
        <taxon>Eukaryota</taxon>
        <taxon>Viridiplantae</taxon>
        <taxon>Chlorophyta</taxon>
        <taxon>core chlorophytes</taxon>
        <taxon>Trebouxiophyceae</taxon>
        <taxon>Chlorellales</taxon>
        <taxon>Chlorellaceae</taxon>
        <taxon>Prototheca</taxon>
    </lineage>
</organism>
<proteinExistence type="inferred from homology"/>
<feature type="chain" id="PRO_0000177307" description="Large ribosomal subunit protein bL20c">
    <location>
        <begin position="1"/>
        <end position="114"/>
    </location>
</feature>
<keyword id="KW-0934">Plastid</keyword>
<keyword id="KW-0687">Ribonucleoprotein</keyword>
<keyword id="KW-0689">Ribosomal protein</keyword>
<keyword id="KW-0694">RNA-binding</keyword>
<keyword id="KW-0699">rRNA-binding</keyword>
<evidence type="ECO:0000255" key="1">
    <source>
        <dbReference type="HAMAP-Rule" id="MF_00382"/>
    </source>
</evidence>
<evidence type="ECO:0000305" key="2"/>
<protein>
    <recommendedName>
        <fullName evidence="1">Large ribosomal subunit protein bL20c</fullName>
    </recommendedName>
    <alternativeName>
        <fullName evidence="2">50S ribosomal protein L20, plastid</fullName>
    </alternativeName>
</protein>
<geneLocation type="non-photosynthetic plastid"/>